<protein>
    <recommendedName>
        <fullName evidence="1">Uridine kinase</fullName>
        <ecNumber evidence="1">2.7.1.48</ecNumber>
    </recommendedName>
    <alternativeName>
        <fullName evidence="1">Cytidine monophosphokinase</fullName>
    </alternativeName>
    <alternativeName>
        <fullName evidence="1">Uridine monophosphokinase</fullName>
    </alternativeName>
</protein>
<evidence type="ECO:0000255" key="1">
    <source>
        <dbReference type="HAMAP-Rule" id="MF_00551"/>
    </source>
</evidence>
<feature type="chain" id="PRO_1000200520" description="Uridine kinase">
    <location>
        <begin position="1"/>
        <end position="208"/>
    </location>
</feature>
<feature type="binding site" evidence="1">
    <location>
        <begin position="11"/>
        <end position="18"/>
    </location>
    <ligand>
        <name>ATP</name>
        <dbReference type="ChEBI" id="CHEBI:30616"/>
    </ligand>
</feature>
<accession>B9DNJ4</accession>
<sequence length="208" mass="23716">MNATTIIGIAGGSGSGKTSVTNEILHNLEGHSVALIAQDYYYKDQSHLTFEERLKTNYDHPFAFDNDLLIQNLMDLRNGIPVEVPTYDYVNHTRSAETIAFQPKDVIIVEGIFALENKTLRDLMDVKIYVDTDADLRILRRLMRDTKERGRSMESVIEQYLNVVRPMHNQFIEPTKRYADIIIPEGGSNKVAIDIMTTKIQSLINNQQ</sequence>
<comment type="catalytic activity">
    <reaction evidence="1">
        <text>uridine + ATP = UMP + ADP + H(+)</text>
        <dbReference type="Rhea" id="RHEA:16825"/>
        <dbReference type="ChEBI" id="CHEBI:15378"/>
        <dbReference type="ChEBI" id="CHEBI:16704"/>
        <dbReference type="ChEBI" id="CHEBI:30616"/>
        <dbReference type="ChEBI" id="CHEBI:57865"/>
        <dbReference type="ChEBI" id="CHEBI:456216"/>
        <dbReference type="EC" id="2.7.1.48"/>
    </reaction>
</comment>
<comment type="catalytic activity">
    <reaction evidence="1">
        <text>cytidine + ATP = CMP + ADP + H(+)</text>
        <dbReference type="Rhea" id="RHEA:24674"/>
        <dbReference type="ChEBI" id="CHEBI:15378"/>
        <dbReference type="ChEBI" id="CHEBI:17562"/>
        <dbReference type="ChEBI" id="CHEBI:30616"/>
        <dbReference type="ChEBI" id="CHEBI:60377"/>
        <dbReference type="ChEBI" id="CHEBI:456216"/>
        <dbReference type="EC" id="2.7.1.48"/>
    </reaction>
</comment>
<comment type="pathway">
    <text evidence="1">Pyrimidine metabolism; CTP biosynthesis via salvage pathway; CTP from cytidine: step 1/3.</text>
</comment>
<comment type="pathway">
    <text evidence="1">Pyrimidine metabolism; UMP biosynthesis via salvage pathway; UMP from uridine: step 1/1.</text>
</comment>
<comment type="subcellular location">
    <subcellularLocation>
        <location evidence="1">Cytoplasm</location>
    </subcellularLocation>
</comment>
<comment type="similarity">
    <text evidence="1">Belongs to the uridine kinase family.</text>
</comment>
<dbReference type="EC" id="2.7.1.48" evidence="1"/>
<dbReference type="EMBL" id="AM295250">
    <property type="protein sequence ID" value="CAL28130.1"/>
    <property type="molecule type" value="Genomic_DNA"/>
</dbReference>
<dbReference type="RefSeq" id="WP_015900470.1">
    <property type="nucleotide sequence ID" value="NC_012121.1"/>
</dbReference>
<dbReference type="SMR" id="B9DNJ4"/>
<dbReference type="GeneID" id="93793648"/>
<dbReference type="KEGG" id="sca:SCA_1223"/>
<dbReference type="eggNOG" id="COG0572">
    <property type="taxonomic scope" value="Bacteria"/>
</dbReference>
<dbReference type="HOGENOM" id="CLU_021278_1_2_9"/>
<dbReference type="OrthoDB" id="9777642at2"/>
<dbReference type="BioCyc" id="SCAR396513:SCA_RS06120-MONOMER"/>
<dbReference type="UniPathway" id="UPA00574">
    <property type="reaction ID" value="UER00637"/>
</dbReference>
<dbReference type="UniPathway" id="UPA00579">
    <property type="reaction ID" value="UER00640"/>
</dbReference>
<dbReference type="Proteomes" id="UP000000444">
    <property type="component" value="Chromosome"/>
</dbReference>
<dbReference type="GO" id="GO:0005737">
    <property type="term" value="C:cytoplasm"/>
    <property type="evidence" value="ECO:0007669"/>
    <property type="project" value="UniProtKB-SubCell"/>
</dbReference>
<dbReference type="GO" id="GO:0005524">
    <property type="term" value="F:ATP binding"/>
    <property type="evidence" value="ECO:0007669"/>
    <property type="project" value="UniProtKB-UniRule"/>
</dbReference>
<dbReference type="GO" id="GO:0043771">
    <property type="term" value="F:cytidine kinase activity"/>
    <property type="evidence" value="ECO:0007669"/>
    <property type="project" value="RHEA"/>
</dbReference>
<dbReference type="GO" id="GO:0004849">
    <property type="term" value="F:uridine kinase activity"/>
    <property type="evidence" value="ECO:0007669"/>
    <property type="project" value="UniProtKB-UniRule"/>
</dbReference>
<dbReference type="GO" id="GO:0044211">
    <property type="term" value="P:CTP salvage"/>
    <property type="evidence" value="ECO:0007669"/>
    <property type="project" value="UniProtKB-UniRule"/>
</dbReference>
<dbReference type="GO" id="GO:0044206">
    <property type="term" value="P:UMP salvage"/>
    <property type="evidence" value="ECO:0007669"/>
    <property type="project" value="UniProtKB-UniRule"/>
</dbReference>
<dbReference type="CDD" id="cd02023">
    <property type="entry name" value="UMPK"/>
    <property type="match status" value="1"/>
</dbReference>
<dbReference type="Gene3D" id="3.40.50.300">
    <property type="entry name" value="P-loop containing nucleotide triphosphate hydrolases"/>
    <property type="match status" value="1"/>
</dbReference>
<dbReference type="HAMAP" id="MF_00551">
    <property type="entry name" value="Uridine_kinase"/>
    <property type="match status" value="1"/>
</dbReference>
<dbReference type="InterPro" id="IPR027417">
    <property type="entry name" value="P-loop_NTPase"/>
</dbReference>
<dbReference type="InterPro" id="IPR006083">
    <property type="entry name" value="PRK/URK"/>
</dbReference>
<dbReference type="InterPro" id="IPR026008">
    <property type="entry name" value="Uridine_kinase"/>
</dbReference>
<dbReference type="InterPro" id="IPR000764">
    <property type="entry name" value="Uridine_kinase-like"/>
</dbReference>
<dbReference type="NCBIfam" id="NF004018">
    <property type="entry name" value="PRK05480.1"/>
    <property type="match status" value="1"/>
</dbReference>
<dbReference type="NCBIfam" id="TIGR00235">
    <property type="entry name" value="udk"/>
    <property type="match status" value="1"/>
</dbReference>
<dbReference type="PANTHER" id="PTHR10285">
    <property type="entry name" value="URIDINE KINASE"/>
    <property type="match status" value="1"/>
</dbReference>
<dbReference type="Pfam" id="PF00485">
    <property type="entry name" value="PRK"/>
    <property type="match status" value="1"/>
</dbReference>
<dbReference type="PRINTS" id="PR00988">
    <property type="entry name" value="URIDINKINASE"/>
</dbReference>
<dbReference type="SUPFAM" id="SSF52540">
    <property type="entry name" value="P-loop containing nucleoside triphosphate hydrolases"/>
    <property type="match status" value="1"/>
</dbReference>
<name>URK_STACT</name>
<proteinExistence type="inferred from homology"/>
<gene>
    <name evidence="1" type="primary">udk</name>
    <name type="ordered locus">Sca_1223</name>
</gene>
<reference key="1">
    <citation type="journal article" date="2009" name="Appl. Environ. Microbiol.">
        <title>Genome analysis of the meat starter culture bacterium Staphylococcus carnosus TM300.</title>
        <authorList>
            <person name="Rosenstein R."/>
            <person name="Nerz C."/>
            <person name="Biswas L."/>
            <person name="Resch A."/>
            <person name="Raddatz G."/>
            <person name="Schuster S.C."/>
            <person name="Goetz F."/>
        </authorList>
    </citation>
    <scope>NUCLEOTIDE SEQUENCE [LARGE SCALE GENOMIC DNA]</scope>
    <source>
        <strain>TM300</strain>
    </source>
</reference>
<organism>
    <name type="scientific">Staphylococcus carnosus (strain TM300)</name>
    <dbReference type="NCBI Taxonomy" id="396513"/>
    <lineage>
        <taxon>Bacteria</taxon>
        <taxon>Bacillati</taxon>
        <taxon>Bacillota</taxon>
        <taxon>Bacilli</taxon>
        <taxon>Bacillales</taxon>
        <taxon>Staphylococcaceae</taxon>
        <taxon>Staphylococcus</taxon>
    </lineage>
</organism>
<keyword id="KW-0067">ATP-binding</keyword>
<keyword id="KW-0963">Cytoplasm</keyword>
<keyword id="KW-0418">Kinase</keyword>
<keyword id="KW-0547">Nucleotide-binding</keyword>
<keyword id="KW-1185">Reference proteome</keyword>
<keyword id="KW-0808">Transferase</keyword>